<name>ATL30_ARATH</name>
<dbReference type="EC" id="2.3.2.27" evidence="5"/>
<dbReference type="EMBL" id="AB016882">
    <property type="protein sequence ID" value="BAB08909.1"/>
    <property type="molecule type" value="Genomic_DNA"/>
</dbReference>
<dbReference type="EMBL" id="CP002688">
    <property type="protein sequence ID" value="AED95410.1"/>
    <property type="molecule type" value="Genomic_DNA"/>
</dbReference>
<dbReference type="RefSeq" id="NP_199477.1">
    <property type="nucleotide sequence ID" value="NM_124035.2"/>
</dbReference>
<dbReference type="SMR" id="Q9FIR0"/>
<dbReference type="IntAct" id="Q9FIR0">
    <property type="interactions" value="1"/>
</dbReference>
<dbReference type="PaxDb" id="3702-AT5G46650.1"/>
<dbReference type="ProteomicsDB" id="246752"/>
<dbReference type="EnsemblPlants" id="AT5G46650.1">
    <property type="protein sequence ID" value="AT5G46650.1"/>
    <property type="gene ID" value="AT5G46650"/>
</dbReference>
<dbReference type="GeneID" id="834708"/>
<dbReference type="Gramene" id="AT5G46650.1">
    <property type="protein sequence ID" value="AT5G46650.1"/>
    <property type="gene ID" value="AT5G46650"/>
</dbReference>
<dbReference type="KEGG" id="ath:AT5G46650"/>
<dbReference type="Araport" id="AT5G46650"/>
<dbReference type="TAIR" id="AT5G46650">
    <property type="gene designation" value="ATL30"/>
</dbReference>
<dbReference type="eggNOG" id="KOG0800">
    <property type="taxonomic scope" value="Eukaryota"/>
</dbReference>
<dbReference type="HOGENOM" id="CLU_035191_3_0_1"/>
<dbReference type="InParanoid" id="Q9FIR0"/>
<dbReference type="OMA" id="QENAHEN"/>
<dbReference type="PhylomeDB" id="Q9FIR0"/>
<dbReference type="UniPathway" id="UPA00143"/>
<dbReference type="PRO" id="PR:Q9FIR0"/>
<dbReference type="Proteomes" id="UP000006548">
    <property type="component" value="Chromosome 5"/>
</dbReference>
<dbReference type="ExpressionAtlas" id="Q9FIR0">
    <property type="expression patterns" value="baseline and differential"/>
</dbReference>
<dbReference type="GO" id="GO:0016020">
    <property type="term" value="C:membrane"/>
    <property type="evidence" value="ECO:0007669"/>
    <property type="project" value="UniProtKB-SubCell"/>
</dbReference>
<dbReference type="GO" id="GO:0016740">
    <property type="term" value="F:transferase activity"/>
    <property type="evidence" value="ECO:0007669"/>
    <property type="project" value="UniProtKB-KW"/>
</dbReference>
<dbReference type="GO" id="GO:0008270">
    <property type="term" value="F:zinc ion binding"/>
    <property type="evidence" value="ECO:0007669"/>
    <property type="project" value="UniProtKB-KW"/>
</dbReference>
<dbReference type="GO" id="GO:0016567">
    <property type="term" value="P:protein ubiquitination"/>
    <property type="evidence" value="ECO:0007669"/>
    <property type="project" value="UniProtKB-UniPathway"/>
</dbReference>
<dbReference type="CDD" id="cd16461">
    <property type="entry name" value="RING-H2_EL5-like"/>
    <property type="match status" value="1"/>
</dbReference>
<dbReference type="FunFam" id="3.30.40.10:FF:000187">
    <property type="entry name" value="E3 ubiquitin-protein ligase ATL6"/>
    <property type="match status" value="1"/>
</dbReference>
<dbReference type="Gene3D" id="3.30.40.10">
    <property type="entry name" value="Zinc/RING finger domain, C3HC4 (zinc finger)"/>
    <property type="match status" value="1"/>
</dbReference>
<dbReference type="InterPro" id="IPR053238">
    <property type="entry name" value="RING-H2_zinc_finger"/>
</dbReference>
<dbReference type="InterPro" id="IPR001841">
    <property type="entry name" value="Znf_RING"/>
</dbReference>
<dbReference type="InterPro" id="IPR013083">
    <property type="entry name" value="Znf_RING/FYVE/PHD"/>
</dbReference>
<dbReference type="PANTHER" id="PTHR14155">
    <property type="entry name" value="RING FINGER DOMAIN-CONTAINING"/>
    <property type="match status" value="1"/>
</dbReference>
<dbReference type="PANTHER" id="PTHR14155:SF521">
    <property type="entry name" value="RING-H2 FINGER PROTEIN ATL30"/>
    <property type="match status" value="1"/>
</dbReference>
<dbReference type="Pfam" id="PF13639">
    <property type="entry name" value="zf-RING_2"/>
    <property type="match status" value="1"/>
</dbReference>
<dbReference type="SMART" id="SM00184">
    <property type="entry name" value="RING"/>
    <property type="match status" value="1"/>
</dbReference>
<dbReference type="SUPFAM" id="SSF57850">
    <property type="entry name" value="RING/U-box"/>
    <property type="match status" value="1"/>
</dbReference>
<dbReference type="PROSITE" id="PS50089">
    <property type="entry name" value="ZF_RING_2"/>
    <property type="match status" value="1"/>
</dbReference>
<comment type="catalytic activity">
    <reaction evidence="5">
        <text>S-ubiquitinyl-[E2 ubiquitin-conjugating enzyme]-L-cysteine + [acceptor protein]-L-lysine = [E2 ubiquitin-conjugating enzyme]-L-cysteine + N(6)-ubiquitinyl-[acceptor protein]-L-lysine.</text>
        <dbReference type="EC" id="2.3.2.27"/>
    </reaction>
</comment>
<comment type="pathway">
    <text>Protein modification; protein ubiquitination.</text>
</comment>
<comment type="subcellular location">
    <subcellularLocation>
        <location evidence="5">Membrane</location>
        <topology evidence="5">Single-pass membrane protein</topology>
    </subcellularLocation>
</comment>
<comment type="domain">
    <text evidence="1">The RING-type zinc finger domain mediates binding to an E2 ubiquitin-conjugating enzyme.</text>
</comment>
<comment type="similarity">
    <text evidence="5">Belongs to the RING-type zinc finger family. ATL subfamily.</text>
</comment>
<protein>
    <recommendedName>
        <fullName>RING-H2 finger protein ATL30</fullName>
        <ecNumber evidence="5">2.3.2.27</ecNumber>
    </recommendedName>
    <alternativeName>
        <fullName evidence="5">RING-type E3 ubiquitin transferase ATL30</fullName>
    </alternativeName>
</protein>
<reference key="1">
    <citation type="journal article" date="1998" name="DNA Res.">
        <title>Structural analysis of Arabidopsis thaliana chromosome 5. VIII. Sequence features of the regions of 1,081,958 bp covered by seventeen physically assigned P1 and TAC clones.</title>
        <authorList>
            <person name="Asamizu E."/>
            <person name="Sato S."/>
            <person name="Kaneko T."/>
            <person name="Nakamura Y."/>
            <person name="Kotani H."/>
            <person name="Miyajima N."/>
            <person name="Tabata S."/>
        </authorList>
    </citation>
    <scope>NUCLEOTIDE SEQUENCE [LARGE SCALE GENOMIC DNA]</scope>
    <source>
        <strain>cv. Columbia</strain>
    </source>
</reference>
<reference key="2">
    <citation type="journal article" date="2017" name="Plant J.">
        <title>Araport11: a complete reannotation of the Arabidopsis thaliana reference genome.</title>
        <authorList>
            <person name="Cheng C.Y."/>
            <person name="Krishnakumar V."/>
            <person name="Chan A.P."/>
            <person name="Thibaud-Nissen F."/>
            <person name="Schobel S."/>
            <person name="Town C.D."/>
        </authorList>
    </citation>
    <scope>GENOME REANNOTATION</scope>
    <source>
        <strain>cv. Columbia</strain>
    </source>
</reference>
<reference key="3">
    <citation type="journal article" date="2002" name="Genome Biol.">
        <title>Evaluation and classification of RING-finger domains encoded by the Arabidopsis genome.</title>
        <authorList>
            <person name="Kosarev P."/>
            <person name="Mayer K.F.X."/>
            <person name="Hardtke C.S."/>
        </authorList>
    </citation>
    <scope>GENE FAMILY ORGANIZATION</scope>
</reference>
<reference key="4">
    <citation type="journal article" date="2006" name="J. Mol. Evol.">
        <title>The ATL gene family from Arabidopsis thaliana and Oryza sativa comprises a large number of putative ubiquitin ligases of the RING-H2 type.</title>
        <authorList>
            <person name="Serrano M."/>
            <person name="Parra S."/>
            <person name="Alcaraz L.D."/>
            <person name="Guzman P."/>
        </authorList>
    </citation>
    <scope>NOMENCLATURE</scope>
    <scope>GENE FAMILY ORGANIZATION</scope>
</reference>
<evidence type="ECO:0000250" key="1"/>
<evidence type="ECO:0000255" key="2"/>
<evidence type="ECO:0000255" key="3">
    <source>
        <dbReference type="PROSITE-ProRule" id="PRU00175"/>
    </source>
</evidence>
<evidence type="ECO:0000256" key="4">
    <source>
        <dbReference type="SAM" id="MobiDB-lite"/>
    </source>
</evidence>
<evidence type="ECO:0000305" key="5"/>
<feature type="chain" id="PRO_0000055815" description="RING-H2 finger protein ATL30">
    <location>
        <begin position="1"/>
        <end position="289"/>
    </location>
</feature>
<feature type="transmembrane region" description="Helical" evidence="2">
    <location>
        <begin position="26"/>
        <end position="46"/>
    </location>
</feature>
<feature type="zinc finger region" description="RING-type; atypical" evidence="3">
    <location>
        <begin position="114"/>
        <end position="157"/>
    </location>
</feature>
<feature type="region of interest" description="Disordered" evidence="4">
    <location>
        <begin position="181"/>
        <end position="206"/>
    </location>
</feature>
<feature type="compositionally biased region" description="Polar residues" evidence="4">
    <location>
        <begin position="188"/>
        <end position="204"/>
    </location>
</feature>
<gene>
    <name type="primary">ATL30</name>
    <name type="ordered locus">At5g46650</name>
    <name type="ORF">MZA15.5</name>
</gene>
<sequence length="289" mass="33432">MPIAKPINQNTTVPYPPQHYSKPPLVIILTVILLVVFFIGFFAIYFCKCFYHTLTEAWNHHYHNGLPENQIQAQQEPVQPPVNPGLEPHIIQSYPLFPFSSVKDLREDKYGLECAICLLEFEEEHILLRLLTTCYHVFHQECIDQWLESNKTCPVCRRNLDPNAPENIKELIIEVIQENAHENRDQEQTSTSNEVMLSRQSSGNNERKIETLPDKFSRSKTTGHSIVRNKPEEEDRYTLRLPDHVKIKVTRRHNNNQTESCISFGELVRNREGRFGEVSGQSLVPESGS</sequence>
<organism>
    <name type="scientific">Arabidopsis thaliana</name>
    <name type="common">Mouse-ear cress</name>
    <dbReference type="NCBI Taxonomy" id="3702"/>
    <lineage>
        <taxon>Eukaryota</taxon>
        <taxon>Viridiplantae</taxon>
        <taxon>Streptophyta</taxon>
        <taxon>Embryophyta</taxon>
        <taxon>Tracheophyta</taxon>
        <taxon>Spermatophyta</taxon>
        <taxon>Magnoliopsida</taxon>
        <taxon>eudicotyledons</taxon>
        <taxon>Gunneridae</taxon>
        <taxon>Pentapetalae</taxon>
        <taxon>rosids</taxon>
        <taxon>malvids</taxon>
        <taxon>Brassicales</taxon>
        <taxon>Brassicaceae</taxon>
        <taxon>Camelineae</taxon>
        <taxon>Arabidopsis</taxon>
    </lineage>
</organism>
<accession>Q9FIR0</accession>
<keyword id="KW-0472">Membrane</keyword>
<keyword id="KW-0479">Metal-binding</keyword>
<keyword id="KW-1185">Reference proteome</keyword>
<keyword id="KW-0808">Transferase</keyword>
<keyword id="KW-0812">Transmembrane</keyword>
<keyword id="KW-1133">Transmembrane helix</keyword>
<keyword id="KW-0833">Ubl conjugation pathway</keyword>
<keyword id="KW-0862">Zinc</keyword>
<keyword id="KW-0863">Zinc-finger</keyword>
<proteinExistence type="evidence at transcript level"/>